<evidence type="ECO:0000250" key="1"/>
<evidence type="ECO:0000255" key="2">
    <source>
        <dbReference type="HAMAP-Rule" id="MF_00534"/>
    </source>
</evidence>
<accession>P58696</accession>
<sequence length="466" mass="52523">MSVVPVADVLQGRVAVDQEVTVRGWVRTRRDSKAGISFLAVYDGSCFDPVQAVINNSLPNYNEEVLHLTTGCSVVVTGKVVASPGQGQSFEIQATKVEVAGWVEDPDTYPMAAKRHSIEYLREVAHLRPRTNLIGAVARVRHTLAQALHRFFDEQGFFWVSTPLITASDTEGAGEMFRVSTLDLENLPRNDQGRVDFDKDFFGKESFLTVSGQLNGETYACALSKIYTFGPTFRAENSNTSRHLAEFWMLEPEVAFADLEDNARLAEAMLKYVFNAVLEERADDMKFFAERVDKDAIARLERFVSTDFAQVDYTDAVAILERCGKTFENPVFWGVDLSSEHERYLAEEHFKAPVVVKNYPKEIKAFYMRLNEDGKTVAAMDVLAPGIGEIIGGSQREERLDVLDARMAEMGLNKEDYWWYRDLRRYGTVPHSGFGLGFERLIAYVTGVQNVRDVIPFPRTPRNASF</sequence>
<comment type="catalytic activity">
    <reaction evidence="2">
        <text>tRNA(Asn) + L-asparagine + ATP = L-asparaginyl-tRNA(Asn) + AMP + diphosphate + H(+)</text>
        <dbReference type="Rhea" id="RHEA:11180"/>
        <dbReference type="Rhea" id="RHEA-COMP:9659"/>
        <dbReference type="Rhea" id="RHEA-COMP:9674"/>
        <dbReference type="ChEBI" id="CHEBI:15378"/>
        <dbReference type="ChEBI" id="CHEBI:30616"/>
        <dbReference type="ChEBI" id="CHEBI:33019"/>
        <dbReference type="ChEBI" id="CHEBI:58048"/>
        <dbReference type="ChEBI" id="CHEBI:78442"/>
        <dbReference type="ChEBI" id="CHEBI:78515"/>
        <dbReference type="ChEBI" id="CHEBI:456215"/>
        <dbReference type="EC" id="6.1.1.22"/>
    </reaction>
</comment>
<comment type="subunit">
    <text evidence="2">Homodimer.</text>
</comment>
<comment type="subcellular location">
    <subcellularLocation>
        <location evidence="2">Cytoplasm</location>
    </subcellularLocation>
</comment>
<comment type="similarity">
    <text evidence="2">Belongs to the class-II aminoacyl-tRNA synthetase family.</text>
</comment>
<organism>
    <name type="scientific">Salmonella typhimurium (strain LT2 / SGSC1412 / ATCC 700720)</name>
    <dbReference type="NCBI Taxonomy" id="99287"/>
    <lineage>
        <taxon>Bacteria</taxon>
        <taxon>Pseudomonadati</taxon>
        <taxon>Pseudomonadota</taxon>
        <taxon>Gammaproteobacteria</taxon>
        <taxon>Enterobacterales</taxon>
        <taxon>Enterobacteriaceae</taxon>
        <taxon>Salmonella</taxon>
    </lineage>
</organism>
<name>SYN_SALTY</name>
<protein>
    <recommendedName>
        <fullName evidence="2">Asparagine--tRNA ligase</fullName>
        <ecNumber evidence="2">6.1.1.22</ecNumber>
    </recommendedName>
    <alternativeName>
        <fullName evidence="2">Asparaginyl-tRNA synthetase</fullName>
        <shortName evidence="2">AsnRS</shortName>
    </alternativeName>
</protein>
<proteinExistence type="inferred from homology"/>
<gene>
    <name evidence="2" type="primary">asnS</name>
    <name type="synonym">tss</name>
    <name type="ordered locus">STM1000</name>
</gene>
<dbReference type="EC" id="6.1.1.22" evidence="2"/>
<dbReference type="EMBL" id="AE006468">
    <property type="protein sequence ID" value="AAL19934.1"/>
    <property type="molecule type" value="Genomic_DNA"/>
</dbReference>
<dbReference type="RefSeq" id="NP_459975.1">
    <property type="nucleotide sequence ID" value="NC_003197.2"/>
</dbReference>
<dbReference type="RefSeq" id="WP_000117870.1">
    <property type="nucleotide sequence ID" value="NC_003197.2"/>
</dbReference>
<dbReference type="SMR" id="P58696"/>
<dbReference type="STRING" id="99287.STM1000"/>
<dbReference type="PaxDb" id="99287-STM1000"/>
<dbReference type="GeneID" id="1252518"/>
<dbReference type="KEGG" id="stm:STM1000"/>
<dbReference type="PATRIC" id="fig|99287.12.peg.1055"/>
<dbReference type="HOGENOM" id="CLU_004553_2_0_6"/>
<dbReference type="OMA" id="PEMAFYD"/>
<dbReference type="PhylomeDB" id="P58696"/>
<dbReference type="BioCyc" id="SENT99287:STM1000-MONOMER"/>
<dbReference type="Proteomes" id="UP000001014">
    <property type="component" value="Chromosome"/>
</dbReference>
<dbReference type="GO" id="GO:0005737">
    <property type="term" value="C:cytoplasm"/>
    <property type="evidence" value="ECO:0007669"/>
    <property type="project" value="UniProtKB-SubCell"/>
</dbReference>
<dbReference type="GO" id="GO:0004816">
    <property type="term" value="F:asparagine-tRNA ligase activity"/>
    <property type="evidence" value="ECO:0007669"/>
    <property type="project" value="UniProtKB-UniRule"/>
</dbReference>
<dbReference type="GO" id="GO:0005524">
    <property type="term" value="F:ATP binding"/>
    <property type="evidence" value="ECO:0007669"/>
    <property type="project" value="UniProtKB-UniRule"/>
</dbReference>
<dbReference type="GO" id="GO:0003676">
    <property type="term" value="F:nucleic acid binding"/>
    <property type="evidence" value="ECO:0007669"/>
    <property type="project" value="InterPro"/>
</dbReference>
<dbReference type="GO" id="GO:0006421">
    <property type="term" value="P:asparaginyl-tRNA aminoacylation"/>
    <property type="evidence" value="ECO:0000318"/>
    <property type="project" value="GO_Central"/>
</dbReference>
<dbReference type="CDD" id="cd00776">
    <property type="entry name" value="AsxRS_core"/>
    <property type="match status" value="1"/>
</dbReference>
<dbReference type="CDD" id="cd04318">
    <property type="entry name" value="EcAsnRS_like_N"/>
    <property type="match status" value="1"/>
</dbReference>
<dbReference type="FunFam" id="2.40.50.140:FF:000116">
    <property type="entry name" value="Asparagine--tRNA ligase"/>
    <property type="match status" value="1"/>
</dbReference>
<dbReference type="FunFam" id="3.30.930.10:FF:000016">
    <property type="entry name" value="Asparagine--tRNA ligase"/>
    <property type="match status" value="1"/>
</dbReference>
<dbReference type="Gene3D" id="3.30.930.10">
    <property type="entry name" value="Bira Bifunctional Protein, Domain 2"/>
    <property type="match status" value="1"/>
</dbReference>
<dbReference type="Gene3D" id="2.40.50.140">
    <property type="entry name" value="Nucleic acid-binding proteins"/>
    <property type="match status" value="1"/>
</dbReference>
<dbReference type="HAMAP" id="MF_00534">
    <property type="entry name" value="Asn_tRNA_synth"/>
    <property type="match status" value="1"/>
</dbReference>
<dbReference type="InterPro" id="IPR004364">
    <property type="entry name" value="Aa-tRNA-synt_II"/>
</dbReference>
<dbReference type="InterPro" id="IPR006195">
    <property type="entry name" value="aa-tRNA-synth_II"/>
</dbReference>
<dbReference type="InterPro" id="IPR045864">
    <property type="entry name" value="aa-tRNA-synth_II/BPL/LPL"/>
</dbReference>
<dbReference type="InterPro" id="IPR004522">
    <property type="entry name" value="Asn-tRNA-ligase"/>
</dbReference>
<dbReference type="InterPro" id="IPR002312">
    <property type="entry name" value="Asp/Asn-tRNA-synth_IIb"/>
</dbReference>
<dbReference type="InterPro" id="IPR012340">
    <property type="entry name" value="NA-bd_OB-fold"/>
</dbReference>
<dbReference type="InterPro" id="IPR004365">
    <property type="entry name" value="NA-bd_OB_tRNA"/>
</dbReference>
<dbReference type="NCBIfam" id="TIGR00457">
    <property type="entry name" value="asnS"/>
    <property type="match status" value="1"/>
</dbReference>
<dbReference type="NCBIfam" id="NF003037">
    <property type="entry name" value="PRK03932.1"/>
    <property type="match status" value="1"/>
</dbReference>
<dbReference type="PANTHER" id="PTHR22594:SF34">
    <property type="entry name" value="ASPARAGINE--TRNA LIGASE, MITOCHONDRIAL-RELATED"/>
    <property type="match status" value="1"/>
</dbReference>
<dbReference type="PANTHER" id="PTHR22594">
    <property type="entry name" value="ASPARTYL/LYSYL-TRNA SYNTHETASE"/>
    <property type="match status" value="1"/>
</dbReference>
<dbReference type="Pfam" id="PF00152">
    <property type="entry name" value="tRNA-synt_2"/>
    <property type="match status" value="1"/>
</dbReference>
<dbReference type="Pfam" id="PF01336">
    <property type="entry name" value="tRNA_anti-codon"/>
    <property type="match status" value="1"/>
</dbReference>
<dbReference type="PRINTS" id="PR01042">
    <property type="entry name" value="TRNASYNTHASP"/>
</dbReference>
<dbReference type="SUPFAM" id="SSF55681">
    <property type="entry name" value="Class II aaRS and biotin synthetases"/>
    <property type="match status" value="1"/>
</dbReference>
<dbReference type="SUPFAM" id="SSF50249">
    <property type="entry name" value="Nucleic acid-binding proteins"/>
    <property type="match status" value="1"/>
</dbReference>
<dbReference type="PROSITE" id="PS50862">
    <property type="entry name" value="AA_TRNA_LIGASE_II"/>
    <property type="match status" value="1"/>
</dbReference>
<keyword id="KW-0030">Aminoacyl-tRNA synthetase</keyword>
<keyword id="KW-0067">ATP-binding</keyword>
<keyword id="KW-0963">Cytoplasm</keyword>
<keyword id="KW-0436">Ligase</keyword>
<keyword id="KW-0547">Nucleotide-binding</keyword>
<keyword id="KW-0648">Protein biosynthesis</keyword>
<keyword id="KW-1185">Reference proteome</keyword>
<reference key="1">
    <citation type="journal article" date="2001" name="Nature">
        <title>Complete genome sequence of Salmonella enterica serovar Typhimurium LT2.</title>
        <authorList>
            <person name="McClelland M."/>
            <person name="Sanderson K.E."/>
            <person name="Spieth J."/>
            <person name="Clifton S.W."/>
            <person name="Latreille P."/>
            <person name="Courtney L."/>
            <person name="Porwollik S."/>
            <person name="Ali J."/>
            <person name="Dante M."/>
            <person name="Du F."/>
            <person name="Hou S."/>
            <person name="Layman D."/>
            <person name="Leonard S."/>
            <person name="Nguyen C."/>
            <person name="Scott K."/>
            <person name="Holmes A."/>
            <person name="Grewal N."/>
            <person name="Mulvaney E."/>
            <person name="Ryan E."/>
            <person name="Sun H."/>
            <person name="Florea L."/>
            <person name="Miller W."/>
            <person name="Stoneking T."/>
            <person name="Nhan M."/>
            <person name="Waterston R."/>
            <person name="Wilson R.K."/>
        </authorList>
    </citation>
    <scope>NUCLEOTIDE SEQUENCE [LARGE SCALE GENOMIC DNA]</scope>
    <source>
        <strain>LT2 / SGSC1412 / ATCC 700720</strain>
    </source>
</reference>
<feature type="initiator methionine" description="Removed" evidence="1">
    <location>
        <position position="1"/>
    </location>
</feature>
<feature type="chain" id="PRO_0000176444" description="Asparagine--tRNA ligase">
    <location>
        <begin position="2"/>
        <end position="466"/>
    </location>
</feature>